<reference key="1">
    <citation type="journal article" date="1997" name="Nature">
        <title>The nucleotide sequence of Saccharomyces cerevisiae chromosome IX.</title>
        <authorList>
            <person name="Churcher C.M."/>
            <person name="Bowman S."/>
            <person name="Badcock K."/>
            <person name="Bankier A.T."/>
            <person name="Brown D."/>
            <person name="Chillingworth T."/>
            <person name="Connor R."/>
            <person name="Devlin K."/>
            <person name="Gentles S."/>
            <person name="Hamlin N."/>
            <person name="Harris D.E."/>
            <person name="Horsnell T."/>
            <person name="Hunt S."/>
            <person name="Jagels K."/>
            <person name="Jones M."/>
            <person name="Lye G."/>
            <person name="Moule S."/>
            <person name="Odell C."/>
            <person name="Pearson D."/>
            <person name="Rajandream M.A."/>
            <person name="Rice P."/>
            <person name="Rowley N."/>
            <person name="Skelton J."/>
            <person name="Smith V."/>
            <person name="Walsh S.V."/>
            <person name="Whitehead S."/>
            <person name="Barrell B.G."/>
        </authorList>
    </citation>
    <scope>NUCLEOTIDE SEQUENCE [LARGE SCALE GENOMIC DNA]</scope>
    <source>
        <strain>ATCC 204508 / S288c</strain>
    </source>
</reference>
<reference key="2">
    <citation type="journal article" date="2014" name="G3 (Bethesda)">
        <title>The reference genome sequence of Saccharomyces cerevisiae: Then and now.</title>
        <authorList>
            <person name="Engel S.R."/>
            <person name="Dietrich F.S."/>
            <person name="Fisk D.G."/>
            <person name="Binkley G."/>
            <person name="Balakrishnan R."/>
            <person name="Costanzo M.C."/>
            <person name="Dwight S.S."/>
            <person name="Hitz B.C."/>
            <person name="Karra K."/>
            <person name="Nash R.S."/>
            <person name="Weng S."/>
            <person name="Wong E.D."/>
            <person name="Lloyd P."/>
            <person name="Skrzypek M.S."/>
            <person name="Miyasato S.R."/>
            <person name="Simison M."/>
            <person name="Cherry J.M."/>
        </authorList>
    </citation>
    <scope>GENOME REANNOTATION</scope>
    <source>
        <strain>ATCC 204508 / S288c</strain>
    </source>
</reference>
<reference key="3">
    <citation type="journal article" date="2001" name="Exp. Cell Res.">
        <title>The Saccharomyces cerevisiae phosphotyrosyl phosphatase activator proteins are required for a subset of the functions disrupted by protein phosphatase 2A mutations.</title>
        <authorList>
            <person name="Van Hoof C."/>
            <person name="Janssens V."/>
            <person name="De Baere I."/>
            <person name="Stark M.J.R."/>
            <person name="de Winde J.H."/>
            <person name="Winderickx J."/>
            <person name="Thevelein J.M."/>
            <person name="Merlevede W."/>
            <person name="Goris J."/>
        </authorList>
    </citation>
    <scope>FUNCTION</scope>
</reference>
<reference key="4">
    <citation type="journal article" date="2001" name="Mol. Cell. Biol.">
        <title>The phosphotyrosyl phosphatase activator, Ncs1p (Rrd1p), functions with Cla4p to regulate the G(2)/M transition in Saccharomyces cerevisiae.</title>
        <authorList>
            <person name="Mitchell D.A."/>
            <person name="Sprague G.F. Jr."/>
        </authorList>
    </citation>
    <scope>FUNCTION</scope>
    <scope>INTERACTION WITH SIT4</scope>
</reference>
<reference key="5">
    <citation type="journal article" date="2003" name="Genes Dev.">
        <title>A novel and essential mechanism determining specificity and activity of protein phosphatase 2A (PP2A) in vivo.</title>
        <authorList>
            <person name="Fellner T."/>
            <person name="Lackner D.H."/>
            <person name="Hombauer H."/>
            <person name="Piribauer P."/>
            <person name="Mudrak I."/>
            <person name="Zaragoza K."/>
            <person name="Juno C."/>
            <person name="Ogris E."/>
        </authorList>
    </citation>
    <scope>FUNCTION</scope>
</reference>
<reference key="6">
    <citation type="journal article" date="2003" name="Nature">
        <title>Global analysis of protein localization in budding yeast.</title>
        <authorList>
            <person name="Huh W.-K."/>
            <person name="Falvo J.V."/>
            <person name="Gerke L.C."/>
            <person name="Carroll A.S."/>
            <person name="Howson R.W."/>
            <person name="Weissman J.S."/>
            <person name="O'Shea E.K."/>
        </authorList>
    </citation>
    <scope>SUBCELLULAR LOCATION [LARGE SCALE ANALYSIS]</scope>
</reference>
<reference key="7">
    <citation type="journal article" date="2003" name="Nature">
        <title>Global analysis of protein expression in yeast.</title>
        <authorList>
            <person name="Ghaemmaghami S."/>
            <person name="Huh W.-K."/>
            <person name="Bower K."/>
            <person name="Howson R.W."/>
            <person name="Belle A."/>
            <person name="Dephoure N."/>
            <person name="O'Shea E.K."/>
            <person name="Weissman J.S."/>
        </authorList>
    </citation>
    <scope>LEVEL OF PROTEIN EXPRESSION [LARGE SCALE ANALYSIS]</scope>
</reference>
<reference key="8">
    <citation type="journal article" date="2004" name="Curr. Genet.">
        <title>The yeast phosphotyrosyl phosphatase activator protein, yPtpa1/Rrd1, interacts with Sit4 phosphatase to mediate resistance to 4-nitroquinoline-1-oxide and UVA.</title>
        <authorList>
            <person name="Douville J."/>
            <person name="David J."/>
            <person name="Fortier P.K."/>
            <person name="Ramotar D."/>
        </authorList>
    </citation>
    <scope>FUNCTION</scope>
    <scope>SUBCELLULAR LOCATION</scope>
    <scope>INTERACTION WITH SIT4</scope>
</reference>
<reference key="9">
    <citation type="journal article" date="2005" name="Biochem. J.">
        <title>Specific interactions of PP2A and PP2A-like phosphatases with the yeast PTPA homologues, Ypa1 and Ypa2.</title>
        <authorList>
            <person name="Van Hoof C."/>
            <person name="Martens E."/>
            <person name="Longin S."/>
            <person name="Jordens J."/>
            <person name="Stevens I."/>
            <person name="Janssens V."/>
            <person name="Goris J."/>
        </authorList>
    </citation>
    <scope>INTERACTION WITH PPG1; PPH3 AND SIT4</scope>
</reference>
<reference key="10">
    <citation type="journal article" date="2005" name="Mol. Biol. Cell">
        <title>The yeast phosphotyrosyl phosphatase activator is part of the Tap42-phosphatase complexes.</title>
        <authorList>
            <person name="Zheng Y."/>
            <person name="Jiang Y."/>
        </authorList>
    </citation>
    <scope>FUNCTION</scope>
    <scope>INTERACTION WITH SIT4 AND TAP42</scope>
</reference>
<reference key="11">
    <citation type="journal article" date="2006" name="J. Biol. Chem.">
        <title>The protein phosphatase 2A phosphatase activator is a novel peptidyl-prolyl cis/trans-isomerase.</title>
        <authorList>
            <person name="Jordens J."/>
            <person name="Janssens V."/>
            <person name="Longin S."/>
            <person name="Stevens I."/>
            <person name="Martens E."/>
            <person name="Bultynck G."/>
            <person name="Engelborghs Y."/>
            <person name="Lescrinier E."/>
            <person name="Waelkens E."/>
            <person name="Goris J."/>
            <person name="Van Hoof C."/>
        </authorList>
    </citation>
    <scope>FUNCTION</scope>
    <scope>CATALYTIC ACTIVITY</scope>
    <scope>MUTAGENESIS OF ASP-205</scope>
</reference>
<reference key="12">
    <citation type="journal article" date="2008" name="Mol. Cell. Proteomics">
        <title>A multidimensional chromatography technology for in-depth phosphoproteome analysis.</title>
        <authorList>
            <person name="Albuquerque C.P."/>
            <person name="Smolka M.B."/>
            <person name="Payne S.H."/>
            <person name="Bafna V."/>
            <person name="Eng J."/>
            <person name="Zhou H."/>
        </authorList>
    </citation>
    <scope>PHOSPHORYLATION [LARGE SCALE ANALYSIS] AT SER-341</scope>
    <scope>IDENTIFICATION BY MASS SPECTROMETRY [LARGE SCALE ANALYSIS]</scope>
</reference>
<reference key="13">
    <citation type="journal article" date="2009" name="Science">
        <title>Global analysis of Cdk1 substrate phosphorylation sites provides insights into evolution.</title>
        <authorList>
            <person name="Holt L.J."/>
            <person name="Tuch B.B."/>
            <person name="Villen J."/>
            <person name="Johnson A.D."/>
            <person name="Gygi S.P."/>
            <person name="Morgan D.O."/>
        </authorList>
    </citation>
    <scope>PHOSPHORYLATION [LARGE SCALE ANALYSIS] AT SER-341</scope>
    <scope>IDENTIFICATION BY MASS SPECTROMETRY [LARGE SCALE ANALYSIS]</scope>
</reference>
<reference key="14">
    <citation type="journal article" date="2020" name="J. Cell Sci.">
        <title>Amino acid homeostatic control by TORC1 in Saccharomyces cerevisiae under high hydrostatic pressure.</title>
        <authorList>
            <person name="Uemura S."/>
            <person name="Mochizuki T."/>
            <person name="Amemiya K."/>
            <person name="Kurosaka G."/>
            <person name="Yazawa M."/>
            <person name="Nakamoto K."/>
            <person name="Ishikawa Y."/>
            <person name="Izawa S."/>
            <person name="Abe F."/>
        </authorList>
    </citation>
    <scope>DISRUPTION PHENOTYPE</scope>
</reference>
<reference evidence="15 16" key="15">
    <citation type="journal article" date="2006" name="Mol. Cell">
        <title>Crystal structure of the PP2A phosphatase activator: implications for its PP2A-specific PPIase activity.</title>
        <authorList>
            <person name="Leulliot N."/>
            <person name="Vicentini G."/>
            <person name="Jordens J."/>
            <person name="Quevillon-Cheruel S."/>
            <person name="Schiltz M."/>
            <person name="Barford D."/>
            <person name="van Tilbeurgh H."/>
            <person name="Goris J."/>
        </authorList>
    </citation>
    <scope>X-RAY CRYSTALLOGRAPHY (2.60 ANGSTROMS) OF 1-319</scope>
</reference>
<evidence type="ECO:0000256" key="1">
    <source>
        <dbReference type="SAM" id="MobiDB-lite"/>
    </source>
</evidence>
<evidence type="ECO:0000269" key="2">
    <source>
    </source>
</evidence>
<evidence type="ECO:0000269" key="3">
    <source>
    </source>
</evidence>
<evidence type="ECO:0000269" key="4">
    <source>
    </source>
</evidence>
<evidence type="ECO:0000269" key="5">
    <source>
    </source>
</evidence>
<evidence type="ECO:0000269" key="6">
    <source>
    </source>
</evidence>
<evidence type="ECO:0000269" key="7">
    <source>
    </source>
</evidence>
<evidence type="ECO:0000269" key="8">
    <source>
    </source>
</evidence>
<evidence type="ECO:0000269" key="9">
    <source>
    </source>
</evidence>
<evidence type="ECO:0000269" key="10">
    <source>
    </source>
</evidence>
<evidence type="ECO:0000303" key="11">
    <source>
    </source>
</evidence>
<evidence type="ECO:0000303" key="12">
    <source>
    </source>
</evidence>
<evidence type="ECO:0000303" key="13">
    <source>
    </source>
</evidence>
<evidence type="ECO:0000305" key="14"/>
<evidence type="ECO:0007744" key="15">
    <source>
        <dbReference type="PDB" id="2IXO"/>
    </source>
</evidence>
<evidence type="ECO:0007744" key="16">
    <source>
        <dbReference type="PDB" id="2IXP"/>
    </source>
</evidence>
<evidence type="ECO:0007744" key="17">
    <source>
    </source>
</evidence>
<evidence type="ECO:0007744" key="18">
    <source>
    </source>
</evidence>
<evidence type="ECO:0007829" key="19">
    <source>
        <dbReference type="PDB" id="2IXO"/>
    </source>
</evidence>
<evidence type="ECO:0007829" key="20">
    <source>
        <dbReference type="PDB" id="2IXP"/>
    </source>
</evidence>
<protein>
    <recommendedName>
        <fullName evidence="12">Serine/threonine-protein phosphatase 2A activator 1</fullName>
        <ecNumber evidence="9">5.2.1.8</ecNumber>
    </recommendedName>
    <alternativeName>
        <fullName evidence="13">Peptidyl-prolyl cis-trans isomerase PTPA-1</fullName>
        <shortName evidence="13">PPIase PTPA-1</shortName>
        <shortName evidence="13">Rotamase PTPA-1</shortName>
    </alternativeName>
    <alternativeName>
        <fullName evidence="12">Phosphotyrosyl phosphatase activator 1</fullName>
    </alternativeName>
</protein>
<accession>P40454</accession>
<accession>D6VVD4</accession>
<dbReference type="EC" id="5.2.1.8" evidence="9"/>
<dbReference type="EMBL" id="Z38059">
    <property type="protein sequence ID" value="CAA86125.1"/>
    <property type="molecule type" value="Genomic_DNA"/>
</dbReference>
<dbReference type="EMBL" id="BK006942">
    <property type="protein sequence ID" value="DAA08400.1"/>
    <property type="molecule type" value="Genomic_DNA"/>
</dbReference>
<dbReference type="PIR" id="S48381">
    <property type="entry name" value="S48381"/>
</dbReference>
<dbReference type="RefSeq" id="NP_012113.1">
    <property type="nucleotide sequence ID" value="NM_001179501.1"/>
</dbReference>
<dbReference type="PDB" id="2IXO">
    <property type="method" value="X-ray"/>
    <property type="resolution" value="2.60 A"/>
    <property type="chains" value="A/B=1-317"/>
</dbReference>
<dbReference type="PDB" id="2IXP">
    <property type="method" value="X-ray"/>
    <property type="resolution" value="2.80 A"/>
    <property type="chains" value="A/B/C/D=1-317"/>
</dbReference>
<dbReference type="PDBsum" id="2IXO"/>
<dbReference type="PDBsum" id="2IXP"/>
<dbReference type="SMR" id="P40454"/>
<dbReference type="BioGRID" id="34839">
    <property type="interactions" value="302"/>
</dbReference>
<dbReference type="ComplexPortal" id="CPX-1863">
    <property type="entry name" value="TAP42-RRD1-SIT4 phosphatase complex"/>
</dbReference>
<dbReference type="DIP" id="DIP-5663N"/>
<dbReference type="FunCoup" id="P40454">
    <property type="interactions" value="142"/>
</dbReference>
<dbReference type="IntAct" id="P40454">
    <property type="interactions" value="20"/>
</dbReference>
<dbReference type="MINT" id="P40454"/>
<dbReference type="STRING" id="4932.YIL153W"/>
<dbReference type="iPTMnet" id="P40454"/>
<dbReference type="PaxDb" id="4932-YIL153W"/>
<dbReference type="PeptideAtlas" id="P40454"/>
<dbReference type="EnsemblFungi" id="YIL153W_mRNA">
    <property type="protein sequence ID" value="YIL153W"/>
    <property type="gene ID" value="YIL153W"/>
</dbReference>
<dbReference type="GeneID" id="854653"/>
<dbReference type="KEGG" id="sce:YIL153W"/>
<dbReference type="AGR" id="SGD:S000001415"/>
<dbReference type="SGD" id="S000001415">
    <property type="gene designation" value="RRD1"/>
</dbReference>
<dbReference type="VEuPathDB" id="FungiDB:YIL153W"/>
<dbReference type="eggNOG" id="KOG2867">
    <property type="taxonomic scope" value="Eukaryota"/>
</dbReference>
<dbReference type="GeneTree" id="ENSGT00390000011500"/>
<dbReference type="HOGENOM" id="CLU_030733_2_1_1"/>
<dbReference type="InParanoid" id="P40454"/>
<dbReference type="OMA" id="IHESQDV"/>
<dbReference type="OrthoDB" id="16120at2759"/>
<dbReference type="BioCyc" id="YEAST:G3O-31402-MONOMER"/>
<dbReference type="BioGRID-ORCS" id="854653">
    <property type="hits" value="0 hits in 10 CRISPR screens"/>
</dbReference>
<dbReference type="ChiTaRS" id="RPP2B">
    <property type="organism name" value="yeast"/>
</dbReference>
<dbReference type="EvolutionaryTrace" id="P40454"/>
<dbReference type="PRO" id="PR:P40454"/>
<dbReference type="Proteomes" id="UP000002311">
    <property type="component" value="Chromosome IX"/>
</dbReference>
<dbReference type="RNAct" id="P40454">
    <property type="molecule type" value="protein"/>
</dbReference>
<dbReference type="GO" id="GO:0000785">
    <property type="term" value="C:chromatin"/>
    <property type="evidence" value="ECO:0000314"/>
    <property type="project" value="SGD"/>
</dbReference>
<dbReference type="GO" id="GO:0005737">
    <property type="term" value="C:cytoplasm"/>
    <property type="evidence" value="ECO:0000314"/>
    <property type="project" value="SGD"/>
</dbReference>
<dbReference type="GO" id="GO:0005634">
    <property type="term" value="C:nucleus"/>
    <property type="evidence" value="ECO:0000314"/>
    <property type="project" value="SGD"/>
</dbReference>
<dbReference type="GO" id="GO:0000159">
    <property type="term" value="C:protein phosphatase type 2A complex"/>
    <property type="evidence" value="ECO:0000353"/>
    <property type="project" value="ComplexPortal"/>
</dbReference>
<dbReference type="GO" id="GO:0003755">
    <property type="term" value="F:peptidyl-prolyl cis-trans isomerase activity"/>
    <property type="evidence" value="ECO:0000314"/>
    <property type="project" value="SGD"/>
</dbReference>
<dbReference type="GO" id="GO:0019888">
    <property type="term" value="F:protein phosphatase regulator activity"/>
    <property type="evidence" value="ECO:0000315"/>
    <property type="project" value="SGD"/>
</dbReference>
<dbReference type="GO" id="GO:0008160">
    <property type="term" value="F:protein tyrosine phosphatase activator activity"/>
    <property type="evidence" value="ECO:0000318"/>
    <property type="project" value="GO_Central"/>
</dbReference>
<dbReference type="GO" id="GO:0006914">
    <property type="term" value="P:autophagy"/>
    <property type="evidence" value="ECO:0000315"/>
    <property type="project" value="SGD"/>
</dbReference>
<dbReference type="GO" id="GO:0033554">
    <property type="term" value="P:cellular response to stress"/>
    <property type="evidence" value="ECO:0000315"/>
    <property type="project" value="SGD"/>
</dbReference>
<dbReference type="GO" id="GO:0006281">
    <property type="term" value="P:DNA repair"/>
    <property type="evidence" value="ECO:0000315"/>
    <property type="project" value="SGD"/>
</dbReference>
<dbReference type="GO" id="GO:0000082">
    <property type="term" value="P:G1/S transition of mitotic cell cycle"/>
    <property type="evidence" value="ECO:0000353"/>
    <property type="project" value="SGD"/>
</dbReference>
<dbReference type="GO" id="GO:0007052">
    <property type="term" value="P:mitotic spindle organization"/>
    <property type="evidence" value="ECO:0000315"/>
    <property type="project" value="SGD"/>
</dbReference>
<dbReference type="GO" id="GO:0006357">
    <property type="term" value="P:regulation of transcription by RNA polymerase II"/>
    <property type="evidence" value="ECO:0000315"/>
    <property type="project" value="SGD"/>
</dbReference>
<dbReference type="GO" id="GO:0031929">
    <property type="term" value="P:TOR signaling"/>
    <property type="evidence" value="ECO:0000303"/>
    <property type="project" value="ComplexPortal"/>
</dbReference>
<dbReference type="CDD" id="cd04087">
    <property type="entry name" value="PTPA"/>
    <property type="match status" value="1"/>
</dbReference>
<dbReference type="FunFam" id="1.20.120.1150:FF:000004">
    <property type="entry name" value="Serine/threonine-protein phosphatase 2A activator 1"/>
    <property type="match status" value="1"/>
</dbReference>
<dbReference type="Gene3D" id="1.20.120.1150">
    <property type="match status" value="1"/>
</dbReference>
<dbReference type="InterPro" id="IPR004327">
    <property type="entry name" value="Phstyr_phstse_ac"/>
</dbReference>
<dbReference type="InterPro" id="IPR043170">
    <property type="entry name" value="PTPA_C_lid"/>
</dbReference>
<dbReference type="InterPro" id="IPR037218">
    <property type="entry name" value="PTPA_sf"/>
</dbReference>
<dbReference type="PANTHER" id="PTHR10012">
    <property type="entry name" value="SERINE/THREONINE-PROTEIN PHOSPHATASE 2A REGULATORY SUBUNIT B"/>
    <property type="match status" value="1"/>
</dbReference>
<dbReference type="PANTHER" id="PTHR10012:SF3">
    <property type="entry name" value="SERINE_THREONINE-PROTEIN PHOSPHATASE 2A ACTIVATOR 1"/>
    <property type="match status" value="1"/>
</dbReference>
<dbReference type="Pfam" id="PF03095">
    <property type="entry name" value="PTPA"/>
    <property type="match status" value="1"/>
</dbReference>
<dbReference type="PIRSF" id="PIRSF016325">
    <property type="entry name" value="Phstyr_phstse_ac"/>
    <property type="match status" value="1"/>
</dbReference>
<dbReference type="SUPFAM" id="SSF140984">
    <property type="entry name" value="PTPA-like"/>
    <property type="match status" value="1"/>
</dbReference>
<organism>
    <name type="scientific">Saccharomyces cerevisiae (strain ATCC 204508 / S288c)</name>
    <name type="common">Baker's yeast</name>
    <dbReference type="NCBI Taxonomy" id="559292"/>
    <lineage>
        <taxon>Eukaryota</taxon>
        <taxon>Fungi</taxon>
        <taxon>Dikarya</taxon>
        <taxon>Ascomycota</taxon>
        <taxon>Saccharomycotina</taxon>
        <taxon>Saccharomycetes</taxon>
        <taxon>Saccharomycetales</taxon>
        <taxon>Saccharomycetaceae</taxon>
        <taxon>Saccharomyces</taxon>
    </lineage>
</organism>
<gene>
    <name type="primary">RRD1</name>
    <name evidence="11" type="synonym">NCS1</name>
    <name type="synonym">YPA1</name>
    <name type="ordered locus">YIL153W</name>
</gene>
<proteinExistence type="evidence at protein level"/>
<name>PTPA1_YEAST</name>
<feature type="chain" id="PRO_0000202955" description="Serine/threonine-protein phosphatase 2A activator 1">
    <location>
        <begin position="1"/>
        <end position="393"/>
    </location>
</feature>
<feature type="region of interest" description="Disordered" evidence="1">
    <location>
        <begin position="328"/>
        <end position="393"/>
    </location>
</feature>
<feature type="compositionally biased region" description="Polar residues" evidence="1">
    <location>
        <begin position="335"/>
        <end position="356"/>
    </location>
</feature>
<feature type="compositionally biased region" description="Polar residues" evidence="1">
    <location>
        <begin position="365"/>
        <end position="386"/>
    </location>
</feature>
<feature type="modified residue" description="Phosphoserine" evidence="17 18">
    <location>
        <position position="341"/>
    </location>
</feature>
<feature type="mutagenesis site" description="Abolishes PPIase activity and fails to activate PP2A phosphatases." evidence="9">
    <original>D</original>
    <variation>G</variation>
    <location>
        <position position="205"/>
    </location>
</feature>
<feature type="turn" evidence="19">
    <location>
        <begin position="8"/>
        <end position="10"/>
    </location>
</feature>
<feature type="helix" evidence="19">
    <location>
        <begin position="23"/>
        <end position="28"/>
    </location>
</feature>
<feature type="helix" evidence="19">
    <location>
        <begin position="29"/>
        <end position="31"/>
    </location>
</feature>
<feature type="helix" evidence="19">
    <location>
        <begin position="33"/>
        <end position="49"/>
    </location>
</feature>
<feature type="helix" evidence="19">
    <location>
        <begin position="65"/>
        <end position="79"/>
    </location>
</feature>
<feature type="helix" evidence="19">
    <location>
        <begin position="97"/>
        <end position="116"/>
    </location>
</feature>
<feature type="helix" evidence="19">
    <location>
        <begin position="119"/>
        <end position="124"/>
    </location>
</feature>
<feature type="helix" evidence="19">
    <location>
        <begin position="125"/>
        <end position="133"/>
    </location>
</feature>
<feature type="turn" evidence="19">
    <location>
        <begin position="139"/>
        <end position="141"/>
    </location>
</feature>
<feature type="helix" evidence="19">
    <location>
        <begin position="146"/>
        <end position="161"/>
    </location>
</feature>
<feature type="helix" evidence="19">
    <location>
        <begin position="170"/>
        <end position="190"/>
    </location>
</feature>
<feature type="helix" evidence="20">
    <location>
        <begin position="200"/>
        <end position="202"/>
    </location>
</feature>
<feature type="strand" evidence="19">
    <location>
        <begin position="205"/>
        <end position="207"/>
    </location>
</feature>
<feature type="helix" evidence="19">
    <location>
        <begin position="210"/>
        <end position="218"/>
    </location>
</feature>
<feature type="strand" evidence="19">
    <location>
        <begin position="220"/>
        <end position="222"/>
    </location>
</feature>
<feature type="helix" evidence="19">
    <location>
        <begin position="223"/>
        <end position="225"/>
    </location>
</feature>
<feature type="strand" evidence="19">
    <location>
        <begin position="226"/>
        <end position="228"/>
    </location>
</feature>
<feature type="helix" evidence="19">
    <location>
        <begin position="230"/>
        <end position="234"/>
    </location>
</feature>
<feature type="helix" evidence="19">
    <location>
        <begin position="236"/>
        <end position="242"/>
    </location>
</feature>
<feature type="turn" evidence="19">
    <location>
        <begin position="243"/>
        <end position="245"/>
    </location>
</feature>
<feature type="helix" evidence="19">
    <location>
        <begin position="247"/>
        <end position="258"/>
    </location>
</feature>
<feature type="helix" evidence="19">
    <location>
        <begin position="263"/>
        <end position="266"/>
    </location>
</feature>
<feature type="helix" evidence="19">
    <location>
        <begin position="268"/>
        <end position="274"/>
    </location>
</feature>
<feature type="helix" evidence="19">
    <location>
        <begin position="280"/>
        <end position="294"/>
    </location>
</feature>
<feature type="turn" evidence="19">
    <location>
        <begin position="295"/>
        <end position="297"/>
    </location>
</feature>
<feature type="helix" evidence="19">
    <location>
        <begin position="299"/>
        <end position="302"/>
    </location>
</feature>
<feature type="strand" evidence="19">
    <location>
        <begin position="309"/>
        <end position="312"/>
    </location>
</feature>
<sequence length="393" mass="45082">MSLDRVDWPHATFSTPVKRIFDTQTTLDFQSSLAIHRIKYHLHKYTTLISHCSDPDPHATASSIAMVNGLMGVLDKLAHLIDETPPLPGPRRYGNLACREWHHKLDERLPQWLQEMLPSEYHEVVPELQYYLGNSFGSSTRLDYGTGHELSFMATVAALDMLGMFPHMRGADVFLLFNKYYTIMRRLILTYTLEPAGSHGVWGLDDHFHLVYILGSSQWQLLDAQAPLQPREILDKSLVREYKDTNFYCQGINFINEVKMGPFEEHSPILYDIAVTVPRWSKVCKGLLKMYSVEVLKKFPVVQHFWFGTGFFPWVNIQNGTDLPVFEEKEEESIEQANAGSPGREQTSTRFPTSTSMPPPGVPPSGNNINYLLSHQNQSHRNQTSFSRDRLRR</sequence>
<comment type="function">
    <text evidence="2 3 4 6 8 9">PPIases accelerate the folding of proteins. It catalyzes the cis-trans isomerization of proline imidic peptide bonds in oligopeptides. Acts as a regulatory subunit for TAP42-associated PP2A-like phosphatases modulating their activity or substrate specificity, probably by inducing a conformational change in the catalytic subunit, a direct target of the PPIase. Can reactivate inactive phosphatase PP2A-phosphatase methylesterase complexes (PP2Ai) in presence of ATP and Mg(2+) by dissociating the inactive form from the complex. Involved in the regulation of cell cycle progression, mitotic spindle formation, bud morphogenesis and DNA repair.</text>
</comment>
<comment type="catalytic activity">
    <reaction evidence="9">
        <text>[protein]-peptidylproline (omega=180) = [protein]-peptidylproline (omega=0)</text>
        <dbReference type="Rhea" id="RHEA:16237"/>
        <dbReference type="Rhea" id="RHEA-COMP:10747"/>
        <dbReference type="Rhea" id="RHEA-COMP:10748"/>
        <dbReference type="ChEBI" id="CHEBI:83833"/>
        <dbReference type="ChEBI" id="CHEBI:83834"/>
        <dbReference type="EC" id="5.2.1.8"/>
    </reaction>
</comment>
<comment type="subunit">
    <text evidence="2 6 7 8">Interacts with the phosphatase PP2A-like catalytic subunits PPG1, PPH3 and SIT4. Forms a ternary complex with SIT4-TAP42.</text>
</comment>
<comment type="interaction">
    <interactant intactId="EBI-25278">
        <id>P40454</id>
    </interactant>
    <interactant intactId="EBI-29107">
        <id>P40164</id>
        <label>PSY2</label>
    </interactant>
    <organismsDiffer>false</organismsDiffer>
    <experiments>4</experiments>
</comment>
<comment type="interaction">
    <interactant intactId="EBI-25278">
        <id>P40454</id>
    </interactant>
    <interactant intactId="EBI-13707">
        <id>P20604</id>
        <label>SIT4</label>
    </interactant>
    <organismsDiffer>false</organismsDiffer>
    <experiments>4</experiments>
</comment>
<comment type="subcellular location">
    <subcellularLocation>
        <location>Cytoplasm</location>
    </subcellularLocation>
    <subcellularLocation>
        <location>Nucleus</location>
    </subcellularLocation>
</comment>
<comment type="disruption phenotype">
    <text evidence="10">Sensitive to high hydrostatic pressure (mechanical stress); simultaneous disruption of SCH9 exacerbates the effect.</text>
</comment>
<comment type="miscellaneous">
    <text evidence="5">Present with 4590 molecules/cell in log phase SD medium.</text>
</comment>
<comment type="similarity">
    <text evidence="14">Belongs to the PTPA-type PPIase family.</text>
</comment>
<keyword id="KW-0002">3D-structure</keyword>
<keyword id="KW-0963">Cytoplasm</keyword>
<keyword id="KW-0413">Isomerase</keyword>
<keyword id="KW-0539">Nucleus</keyword>
<keyword id="KW-0597">Phosphoprotein</keyword>
<keyword id="KW-1185">Reference proteome</keyword>
<keyword id="KW-0697">Rotamase</keyword>